<accession>A5W1G1</accession>
<protein>
    <recommendedName>
        <fullName evidence="1">High frequency lysogenization protein HflD homolog</fullName>
    </recommendedName>
</protein>
<name>HFLD_PSEP1</name>
<dbReference type="EMBL" id="CP000712">
    <property type="protein sequence ID" value="ABQ77971.1"/>
    <property type="molecule type" value="Genomic_DNA"/>
</dbReference>
<dbReference type="SMR" id="A5W1G1"/>
<dbReference type="KEGG" id="ppf:Pput_1818"/>
<dbReference type="eggNOG" id="COG2915">
    <property type="taxonomic scope" value="Bacteria"/>
</dbReference>
<dbReference type="HOGENOM" id="CLU_098920_0_0_6"/>
<dbReference type="GO" id="GO:0005737">
    <property type="term" value="C:cytoplasm"/>
    <property type="evidence" value="ECO:0007669"/>
    <property type="project" value="UniProtKB-SubCell"/>
</dbReference>
<dbReference type="GO" id="GO:0005886">
    <property type="term" value="C:plasma membrane"/>
    <property type="evidence" value="ECO:0007669"/>
    <property type="project" value="UniProtKB-SubCell"/>
</dbReference>
<dbReference type="Gene3D" id="1.10.3890.10">
    <property type="entry name" value="HflD-like"/>
    <property type="match status" value="1"/>
</dbReference>
<dbReference type="HAMAP" id="MF_00695">
    <property type="entry name" value="HflD_protein"/>
    <property type="match status" value="1"/>
</dbReference>
<dbReference type="InterPro" id="IPR007451">
    <property type="entry name" value="HflD"/>
</dbReference>
<dbReference type="InterPro" id="IPR035932">
    <property type="entry name" value="HflD-like_sf"/>
</dbReference>
<dbReference type="NCBIfam" id="NF001246">
    <property type="entry name" value="PRK00218.1-2"/>
    <property type="match status" value="1"/>
</dbReference>
<dbReference type="NCBIfam" id="NF001247">
    <property type="entry name" value="PRK00218.1-3"/>
    <property type="match status" value="1"/>
</dbReference>
<dbReference type="PANTHER" id="PTHR38100">
    <property type="entry name" value="HIGH FREQUENCY LYSOGENIZATION PROTEIN HFLD"/>
    <property type="match status" value="1"/>
</dbReference>
<dbReference type="PANTHER" id="PTHR38100:SF1">
    <property type="entry name" value="HIGH FREQUENCY LYSOGENIZATION PROTEIN HFLD"/>
    <property type="match status" value="1"/>
</dbReference>
<dbReference type="Pfam" id="PF04356">
    <property type="entry name" value="DUF489"/>
    <property type="match status" value="1"/>
</dbReference>
<dbReference type="SUPFAM" id="SSF101322">
    <property type="entry name" value="YcfC-like"/>
    <property type="match status" value="1"/>
</dbReference>
<gene>
    <name evidence="1" type="primary">hflD</name>
    <name type="ordered locus">Pput_1818</name>
</gene>
<comment type="subcellular location">
    <subcellularLocation>
        <location>Cytoplasm</location>
    </subcellularLocation>
    <subcellularLocation>
        <location evidence="1">Cell inner membrane</location>
        <topology evidence="1">Peripheral membrane protein</topology>
        <orientation evidence="1">Cytoplasmic side</orientation>
    </subcellularLocation>
</comment>
<comment type="similarity">
    <text evidence="1">Belongs to the HflD family.</text>
</comment>
<proteinExistence type="inferred from homology"/>
<organism>
    <name type="scientific">Pseudomonas putida (strain ATCC 700007 / DSM 6899 / JCM 31910 / BCRC 17059 / LMG 24140 / F1)</name>
    <dbReference type="NCBI Taxonomy" id="351746"/>
    <lineage>
        <taxon>Bacteria</taxon>
        <taxon>Pseudomonadati</taxon>
        <taxon>Pseudomonadota</taxon>
        <taxon>Gammaproteobacteria</taxon>
        <taxon>Pseudomonadales</taxon>
        <taxon>Pseudomonadaceae</taxon>
        <taxon>Pseudomonas</taxon>
    </lineage>
</organism>
<sequence>MSNLQEQLIALGGVFQAAVLVDRIARTGQASEANIGCMLGSLLVRDPKDTLEVFGGDDLNLRDGYRALIGALERDPNSLQREPLRYALSMLGLERQLNKRGDLLDTIGNRLPQIQSQAEHFGLVHENVIASSGALYQDTLSTLRQRIQVHGDMRFLQQPNNASKIRALLLAGIRAARLWRQLGGHRWQLVFSRRKLLNELYDMMRSPN</sequence>
<evidence type="ECO:0000255" key="1">
    <source>
        <dbReference type="HAMAP-Rule" id="MF_00695"/>
    </source>
</evidence>
<feature type="chain" id="PRO_1000062052" description="High frequency lysogenization protein HflD homolog">
    <location>
        <begin position="1"/>
        <end position="208"/>
    </location>
</feature>
<keyword id="KW-0997">Cell inner membrane</keyword>
<keyword id="KW-1003">Cell membrane</keyword>
<keyword id="KW-0963">Cytoplasm</keyword>
<keyword id="KW-0472">Membrane</keyword>
<reference key="1">
    <citation type="submission" date="2007-05" db="EMBL/GenBank/DDBJ databases">
        <title>Complete sequence of Pseudomonas putida F1.</title>
        <authorList>
            <consortium name="US DOE Joint Genome Institute"/>
            <person name="Copeland A."/>
            <person name="Lucas S."/>
            <person name="Lapidus A."/>
            <person name="Barry K."/>
            <person name="Detter J.C."/>
            <person name="Glavina del Rio T."/>
            <person name="Hammon N."/>
            <person name="Israni S."/>
            <person name="Dalin E."/>
            <person name="Tice H."/>
            <person name="Pitluck S."/>
            <person name="Chain P."/>
            <person name="Malfatti S."/>
            <person name="Shin M."/>
            <person name="Vergez L."/>
            <person name="Schmutz J."/>
            <person name="Larimer F."/>
            <person name="Land M."/>
            <person name="Hauser L."/>
            <person name="Kyrpides N."/>
            <person name="Lykidis A."/>
            <person name="Parales R."/>
            <person name="Richardson P."/>
        </authorList>
    </citation>
    <scope>NUCLEOTIDE SEQUENCE [LARGE SCALE GENOMIC DNA]</scope>
    <source>
        <strain>ATCC 700007 / DSM 6899 / JCM 31910 / BCRC 17059 / LMG 24140 / F1</strain>
    </source>
</reference>